<reference key="1">
    <citation type="journal article" date="2000" name="Nature">
        <title>Complete genome sequence of Pseudomonas aeruginosa PAO1, an opportunistic pathogen.</title>
        <authorList>
            <person name="Stover C.K."/>
            <person name="Pham X.-Q.T."/>
            <person name="Erwin A.L."/>
            <person name="Mizoguchi S.D."/>
            <person name="Warrener P."/>
            <person name="Hickey M.J."/>
            <person name="Brinkman F.S.L."/>
            <person name="Hufnagle W.O."/>
            <person name="Kowalik D.J."/>
            <person name="Lagrou M."/>
            <person name="Garber R.L."/>
            <person name="Goltry L."/>
            <person name="Tolentino E."/>
            <person name="Westbrock-Wadman S."/>
            <person name="Yuan Y."/>
            <person name="Brody L.L."/>
            <person name="Coulter S.N."/>
            <person name="Folger K.R."/>
            <person name="Kas A."/>
            <person name="Larbig K."/>
            <person name="Lim R.M."/>
            <person name="Smith K.A."/>
            <person name="Spencer D.H."/>
            <person name="Wong G.K.-S."/>
            <person name="Wu Z."/>
            <person name="Paulsen I.T."/>
            <person name="Reizer J."/>
            <person name="Saier M.H. Jr."/>
            <person name="Hancock R.E.W."/>
            <person name="Lory S."/>
            <person name="Olson M.V."/>
        </authorList>
    </citation>
    <scope>NUCLEOTIDE SEQUENCE [LARGE SCALE GENOMIC DNA]</scope>
    <source>
        <strain>ATCC 15692 / DSM 22644 / CIP 104116 / JCM 14847 / LMG 12228 / 1C / PRS 101 / PAO1</strain>
    </source>
</reference>
<proteinExistence type="evidence at protein level"/>
<name>IF2_PSEAE</name>
<dbReference type="EMBL" id="AE004091">
    <property type="protein sequence ID" value="AAG08130.1"/>
    <property type="molecule type" value="Genomic_DNA"/>
</dbReference>
<dbReference type="PIR" id="G83052">
    <property type="entry name" value="G83052"/>
</dbReference>
<dbReference type="RefSeq" id="NP_253432.1">
    <property type="nucleotide sequence ID" value="NC_002516.2"/>
</dbReference>
<dbReference type="RefSeq" id="WP_003113908.1">
    <property type="nucleotide sequence ID" value="NZ_QZGE01000018.1"/>
</dbReference>
<dbReference type="PDB" id="7UIU">
    <property type="method" value="EM"/>
    <property type="resolution" value="2.80 A"/>
    <property type="chains" value="x=1-840"/>
</dbReference>
<dbReference type="PDB" id="7UNQ">
    <property type="method" value="EM"/>
    <property type="resolution" value="3.40 A"/>
    <property type="chains" value="x=1-840"/>
</dbReference>
<dbReference type="PDB" id="7UNR">
    <property type="method" value="EM"/>
    <property type="resolution" value="2.90 A"/>
    <property type="chains" value="x=1-840"/>
</dbReference>
<dbReference type="PDB" id="7UNT">
    <property type="method" value="EM"/>
    <property type="resolution" value="3.60 A"/>
    <property type="chains" value="x=1-840"/>
</dbReference>
<dbReference type="PDB" id="7UNU">
    <property type="method" value="EM"/>
    <property type="resolution" value="2.90 A"/>
    <property type="chains" value="x=1-840"/>
</dbReference>
<dbReference type="PDB" id="7UNV">
    <property type="method" value="EM"/>
    <property type="resolution" value="2.70 A"/>
    <property type="chains" value="x=1-840"/>
</dbReference>
<dbReference type="PDB" id="7UNW">
    <property type="method" value="EM"/>
    <property type="resolution" value="2.60 A"/>
    <property type="chains" value="x=1-840"/>
</dbReference>
<dbReference type="PDBsum" id="7UIU"/>
<dbReference type="PDBsum" id="7UNQ"/>
<dbReference type="PDBsum" id="7UNR"/>
<dbReference type="PDBsum" id="7UNT"/>
<dbReference type="PDBsum" id="7UNU"/>
<dbReference type="PDBsum" id="7UNV"/>
<dbReference type="PDBsum" id="7UNW"/>
<dbReference type="EMDB" id="EMD-26553"/>
<dbReference type="EMDB" id="EMD-26629"/>
<dbReference type="EMDB" id="EMD-26630"/>
<dbReference type="EMDB" id="EMD-26632"/>
<dbReference type="EMDB" id="EMD-26633"/>
<dbReference type="EMDB" id="EMD-26634"/>
<dbReference type="EMDB" id="EMD-26635"/>
<dbReference type="SMR" id="Q9HV55"/>
<dbReference type="FunCoup" id="Q9HV55">
    <property type="interactions" value="794"/>
</dbReference>
<dbReference type="STRING" id="208964.PA4744"/>
<dbReference type="PaxDb" id="208964-PA4744"/>
<dbReference type="GeneID" id="881695"/>
<dbReference type="KEGG" id="pae:PA4744"/>
<dbReference type="PATRIC" id="fig|208964.12.peg.4970"/>
<dbReference type="PseudoCAP" id="PA4744"/>
<dbReference type="HOGENOM" id="CLU_006301_6_1_6"/>
<dbReference type="InParanoid" id="Q9HV55"/>
<dbReference type="OrthoDB" id="9811804at2"/>
<dbReference type="PhylomeDB" id="Q9HV55"/>
<dbReference type="BioCyc" id="PAER208964:G1FZ6-4854-MONOMER"/>
<dbReference type="Proteomes" id="UP000002438">
    <property type="component" value="Chromosome"/>
</dbReference>
<dbReference type="GO" id="GO:0005737">
    <property type="term" value="C:cytoplasm"/>
    <property type="evidence" value="ECO:0000318"/>
    <property type="project" value="GO_Central"/>
</dbReference>
<dbReference type="GO" id="GO:0005829">
    <property type="term" value="C:cytosol"/>
    <property type="evidence" value="ECO:0000318"/>
    <property type="project" value="GO_Central"/>
</dbReference>
<dbReference type="GO" id="GO:0005525">
    <property type="term" value="F:GTP binding"/>
    <property type="evidence" value="ECO:0007669"/>
    <property type="project" value="UniProtKB-KW"/>
</dbReference>
<dbReference type="GO" id="GO:0003924">
    <property type="term" value="F:GTPase activity"/>
    <property type="evidence" value="ECO:0007669"/>
    <property type="project" value="UniProtKB-UniRule"/>
</dbReference>
<dbReference type="GO" id="GO:0003743">
    <property type="term" value="F:translation initiation factor activity"/>
    <property type="evidence" value="ECO:0000318"/>
    <property type="project" value="GO_Central"/>
</dbReference>
<dbReference type="GO" id="GO:0006413">
    <property type="term" value="P:translational initiation"/>
    <property type="evidence" value="ECO:0000315"/>
    <property type="project" value="PseudoCAP"/>
</dbReference>
<dbReference type="CDD" id="cd01887">
    <property type="entry name" value="IF2_eIF5B"/>
    <property type="match status" value="1"/>
</dbReference>
<dbReference type="CDD" id="cd03702">
    <property type="entry name" value="IF2_mtIF2_II"/>
    <property type="match status" value="1"/>
</dbReference>
<dbReference type="CDD" id="cd03692">
    <property type="entry name" value="mtIF2_IVc"/>
    <property type="match status" value="1"/>
</dbReference>
<dbReference type="FunFam" id="2.40.30.10:FF:000007">
    <property type="entry name" value="Translation initiation factor IF-2"/>
    <property type="match status" value="1"/>
</dbReference>
<dbReference type="FunFam" id="2.40.30.10:FF:000008">
    <property type="entry name" value="Translation initiation factor IF-2"/>
    <property type="match status" value="1"/>
</dbReference>
<dbReference type="FunFam" id="3.40.50.10050:FF:000001">
    <property type="entry name" value="Translation initiation factor IF-2"/>
    <property type="match status" value="1"/>
</dbReference>
<dbReference type="FunFam" id="3.40.50.300:FF:000019">
    <property type="entry name" value="Translation initiation factor IF-2"/>
    <property type="match status" value="1"/>
</dbReference>
<dbReference type="Gene3D" id="3.40.50.300">
    <property type="entry name" value="P-loop containing nucleotide triphosphate hydrolases"/>
    <property type="match status" value="1"/>
</dbReference>
<dbReference type="Gene3D" id="3.30.56.50">
    <property type="entry name" value="Putative DNA-binding domain, N-terminal subdomain of bacterial translation initiation factor IF2"/>
    <property type="match status" value="1"/>
</dbReference>
<dbReference type="Gene3D" id="2.40.30.10">
    <property type="entry name" value="Translation factors"/>
    <property type="match status" value="2"/>
</dbReference>
<dbReference type="Gene3D" id="3.40.50.10050">
    <property type="entry name" value="Translation initiation factor IF- 2, domain 3"/>
    <property type="match status" value="1"/>
</dbReference>
<dbReference type="HAMAP" id="MF_00100_B">
    <property type="entry name" value="IF_2_B"/>
    <property type="match status" value="1"/>
</dbReference>
<dbReference type="InterPro" id="IPR009061">
    <property type="entry name" value="DNA-bd_dom_put_sf"/>
</dbReference>
<dbReference type="InterPro" id="IPR053905">
    <property type="entry name" value="EF-G-like_DII"/>
</dbReference>
<dbReference type="InterPro" id="IPR013575">
    <property type="entry name" value="IF2_assoc_dom_bac"/>
</dbReference>
<dbReference type="InterPro" id="IPR044145">
    <property type="entry name" value="IF2_II"/>
</dbReference>
<dbReference type="InterPro" id="IPR006847">
    <property type="entry name" value="IF2_N"/>
</dbReference>
<dbReference type="InterPro" id="IPR027417">
    <property type="entry name" value="P-loop_NTPase"/>
</dbReference>
<dbReference type="InterPro" id="IPR005225">
    <property type="entry name" value="Small_GTP-bd"/>
</dbReference>
<dbReference type="InterPro" id="IPR000795">
    <property type="entry name" value="T_Tr_GTP-bd_dom"/>
</dbReference>
<dbReference type="InterPro" id="IPR000178">
    <property type="entry name" value="TF_IF2_bacterial-like"/>
</dbReference>
<dbReference type="InterPro" id="IPR015760">
    <property type="entry name" value="TIF_IF2"/>
</dbReference>
<dbReference type="InterPro" id="IPR023115">
    <property type="entry name" value="TIF_IF2_dom3"/>
</dbReference>
<dbReference type="InterPro" id="IPR036925">
    <property type="entry name" value="TIF_IF2_dom3_sf"/>
</dbReference>
<dbReference type="InterPro" id="IPR009000">
    <property type="entry name" value="Transl_B-barrel_sf"/>
</dbReference>
<dbReference type="NCBIfam" id="TIGR00487">
    <property type="entry name" value="IF-2"/>
    <property type="match status" value="1"/>
</dbReference>
<dbReference type="NCBIfam" id="TIGR00231">
    <property type="entry name" value="small_GTP"/>
    <property type="match status" value="1"/>
</dbReference>
<dbReference type="PANTHER" id="PTHR43381:SF5">
    <property type="entry name" value="TR-TYPE G DOMAIN-CONTAINING PROTEIN"/>
    <property type="match status" value="1"/>
</dbReference>
<dbReference type="PANTHER" id="PTHR43381">
    <property type="entry name" value="TRANSLATION INITIATION FACTOR IF-2-RELATED"/>
    <property type="match status" value="1"/>
</dbReference>
<dbReference type="Pfam" id="PF22042">
    <property type="entry name" value="EF-G_D2"/>
    <property type="match status" value="1"/>
</dbReference>
<dbReference type="Pfam" id="PF00009">
    <property type="entry name" value="GTP_EFTU"/>
    <property type="match status" value="1"/>
</dbReference>
<dbReference type="Pfam" id="PF11987">
    <property type="entry name" value="IF-2"/>
    <property type="match status" value="1"/>
</dbReference>
<dbReference type="Pfam" id="PF08364">
    <property type="entry name" value="IF2_assoc"/>
    <property type="match status" value="1"/>
</dbReference>
<dbReference type="Pfam" id="PF04760">
    <property type="entry name" value="IF2_N"/>
    <property type="match status" value="2"/>
</dbReference>
<dbReference type="SUPFAM" id="SSF52156">
    <property type="entry name" value="Initiation factor IF2/eIF5b, domain 3"/>
    <property type="match status" value="1"/>
</dbReference>
<dbReference type="SUPFAM" id="SSF52540">
    <property type="entry name" value="P-loop containing nucleoside triphosphate hydrolases"/>
    <property type="match status" value="1"/>
</dbReference>
<dbReference type="SUPFAM" id="SSF46955">
    <property type="entry name" value="Putative DNA-binding domain"/>
    <property type="match status" value="1"/>
</dbReference>
<dbReference type="SUPFAM" id="SSF50447">
    <property type="entry name" value="Translation proteins"/>
    <property type="match status" value="2"/>
</dbReference>
<dbReference type="PROSITE" id="PS51722">
    <property type="entry name" value="G_TR_2"/>
    <property type="match status" value="1"/>
</dbReference>
<dbReference type="PROSITE" id="PS01176">
    <property type="entry name" value="IF2"/>
    <property type="match status" value="1"/>
</dbReference>
<comment type="function">
    <text evidence="2">One of the essential components for the initiation of protein synthesis. Protects formylmethionyl-tRNA from spontaneous hydrolysis and promotes its binding to the 30S ribosomal subunits. Also involved in the hydrolysis of GTP during the formation of the 70S ribosomal complex.</text>
</comment>
<comment type="subcellular location">
    <subcellularLocation>
        <location evidence="2">Cytoplasm</location>
    </subcellularLocation>
</comment>
<comment type="similarity">
    <text evidence="2">Belongs to the TRAFAC class translation factor GTPase superfamily. Classic translation factor GTPase family. IF-2 subfamily.</text>
</comment>
<gene>
    <name evidence="2" type="primary">infB</name>
    <name type="ordered locus">PA4744</name>
</gene>
<accession>Q9HV55</accession>
<evidence type="ECO:0000250" key="1"/>
<evidence type="ECO:0000255" key="2">
    <source>
        <dbReference type="HAMAP-Rule" id="MF_00100"/>
    </source>
</evidence>
<evidence type="ECO:0000256" key="3">
    <source>
        <dbReference type="SAM" id="MobiDB-lite"/>
    </source>
</evidence>
<evidence type="ECO:0007829" key="4">
    <source>
        <dbReference type="PDB" id="7UIU"/>
    </source>
</evidence>
<evidence type="ECO:0007829" key="5">
    <source>
        <dbReference type="PDB" id="7UNQ"/>
    </source>
</evidence>
<keyword id="KW-0002">3D-structure</keyword>
<keyword id="KW-0963">Cytoplasm</keyword>
<keyword id="KW-0342">GTP-binding</keyword>
<keyword id="KW-0396">Initiation factor</keyword>
<keyword id="KW-0547">Nucleotide-binding</keyword>
<keyword id="KW-0648">Protein biosynthesis</keyword>
<keyword id="KW-1185">Reference proteome</keyword>
<feature type="chain" id="PRO_0000137236" description="Translation initiation factor IF-2">
    <location>
        <begin position="1"/>
        <end position="840"/>
    </location>
</feature>
<feature type="domain" description="tr-type G">
    <location>
        <begin position="340"/>
        <end position="509"/>
    </location>
</feature>
<feature type="region of interest" description="Disordered" evidence="3">
    <location>
        <begin position="95"/>
        <end position="155"/>
    </location>
</feature>
<feature type="region of interest" description="Disordered" evidence="3">
    <location>
        <begin position="173"/>
        <end position="256"/>
    </location>
</feature>
<feature type="region of interest" description="G1" evidence="1">
    <location>
        <begin position="349"/>
        <end position="356"/>
    </location>
</feature>
<feature type="region of interest" description="G2" evidence="1">
    <location>
        <begin position="374"/>
        <end position="378"/>
    </location>
</feature>
<feature type="region of interest" description="G3" evidence="1">
    <location>
        <begin position="395"/>
        <end position="398"/>
    </location>
</feature>
<feature type="region of interest" description="G4" evidence="1">
    <location>
        <begin position="449"/>
        <end position="452"/>
    </location>
</feature>
<feature type="region of interest" description="G5" evidence="1">
    <location>
        <begin position="485"/>
        <end position="487"/>
    </location>
</feature>
<feature type="compositionally biased region" description="Basic and acidic residues" evidence="3">
    <location>
        <begin position="95"/>
        <end position="143"/>
    </location>
</feature>
<feature type="compositionally biased region" description="Low complexity" evidence="3">
    <location>
        <begin position="144"/>
        <end position="155"/>
    </location>
</feature>
<feature type="compositionally biased region" description="Basic and acidic residues" evidence="3">
    <location>
        <begin position="175"/>
        <end position="191"/>
    </location>
</feature>
<feature type="compositionally biased region" description="Basic and acidic residues" evidence="3">
    <location>
        <begin position="223"/>
        <end position="232"/>
    </location>
</feature>
<feature type="compositionally biased region" description="Basic residues" evidence="3">
    <location>
        <begin position="233"/>
        <end position="247"/>
    </location>
</feature>
<feature type="binding site" evidence="2">
    <location>
        <begin position="349"/>
        <end position="356"/>
    </location>
    <ligand>
        <name>GTP</name>
        <dbReference type="ChEBI" id="CHEBI:37565"/>
    </ligand>
</feature>
<feature type="binding site" evidence="2">
    <location>
        <begin position="395"/>
        <end position="399"/>
    </location>
    <ligand>
        <name>GTP</name>
        <dbReference type="ChEBI" id="CHEBI:37565"/>
    </ligand>
</feature>
<feature type="binding site" evidence="2">
    <location>
        <begin position="449"/>
        <end position="452"/>
    </location>
    <ligand>
        <name>GTP</name>
        <dbReference type="ChEBI" id="CHEBI:37565"/>
    </ligand>
</feature>
<feature type="strand" evidence="4">
    <location>
        <begin position="265"/>
        <end position="268"/>
    </location>
</feature>
<feature type="helix" evidence="4">
    <location>
        <begin position="269"/>
        <end position="275"/>
    </location>
</feature>
<feature type="helix" evidence="4">
    <location>
        <begin position="280"/>
        <end position="289"/>
    </location>
</feature>
<feature type="strand" evidence="4">
    <location>
        <begin position="299"/>
        <end position="301"/>
    </location>
</feature>
<feature type="helix" evidence="4">
    <location>
        <begin position="302"/>
        <end position="311"/>
    </location>
</feature>
<feature type="helix" evidence="4">
    <location>
        <begin position="323"/>
        <end position="327"/>
    </location>
</feature>
<feature type="turn" evidence="4">
    <location>
        <begin position="328"/>
        <end position="331"/>
    </location>
</feature>
<feature type="strand" evidence="5">
    <location>
        <begin position="344"/>
        <end position="349"/>
    </location>
</feature>
<feature type="helix" evidence="5">
    <location>
        <begin position="355"/>
        <end position="366"/>
    </location>
</feature>
<feature type="strand" evidence="5">
    <location>
        <begin position="382"/>
        <end position="385"/>
    </location>
</feature>
<feature type="strand" evidence="5">
    <location>
        <begin position="390"/>
        <end position="393"/>
    </location>
</feature>
<feature type="turn" evidence="5">
    <location>
        <begin position="398"/>
        <end position="400"/>
    </location>
</feature>
<feature type="helix" evidence="5">
    <location>
        <begin position="401"/>
        <end position="404"/>
    </location>
</feature>
<feature type="turn" evidence="5">
    <location>
        <begin position="405"/>
        <end position="409"/>
    </location>
</feature>
<feature type="strand" evidence="5">
    <location>
        <begin position="415"/>
        <end position="420"/>
    </location>
</feature>
<feature type="strand" evidence="5">
    <location>
        <begin position="422"/>
        <end position="424"/>
    </location>
</feature>
<feature type="helix" evidence="5">
    <location>
        <begin position="430"/>
        <end position="439"/>
    </location>
</feature>
<feature type="strand" evidence="5">
    <location>
        <begin position="444"/>
        <end position="448"/>
    </location>
</feature>
<feature type="strand" evidence="5">
    <location>
        <begin position="452"/>
        <end position="455"/>
    </location>
</feature>
<feature type="helix" evidence="5">
    <location>
        <begin position="459"/>
        <end position="464"/>
    </location>
</feature>
<feature type="helix" evidence="5">
    <location>
        <begin position="466"/>
        <end position="468"/>
    </location>
</feature>
<feature type="turn" evidence="5">
    <location>
        <begin position="473"/>
        <end position="475"/>
    </location>
</feature>
<feature type="strand" evidence="5">
    <location>
        <begin position="481"/>
        <end position="483"/>
    </location>
</feature>
<feature type="turn" evidence="5">
    <location>
        <begin position="486"/>
        <end position="488"/>
    </location>
</feature>
<feature type="helix" evidence="5">
    <location>
        <begin position="492"/>
        <end position="505"/>
    </location>
</feature>
<feature type="strand" evidence="5">
    <location>
        <begin position="517"/>
        <end position="526"/>
    </location>
</feature>
<feature type="turn" evidence="5">
    <location>
        <begin position="527"/>
        <end position="529"/>
    </location>
</feature>
<feature type="strand" evidence="5">
    <location>
        <begin position="530"/>
        <end position="541"/>
    </location>
</feature>
<feature type="strand" evidence="5">
    <location>
        <begin position="547"/>
        <end position="550"/>
    </location>
</feature>
<feature type="strand" evidence="5">
    <location>
        <begin position="553"/>
        <end position="556"/>
    </location>
</feature>
<feature type="strand" evidence="5">
    <location>
        <begin position="558"/>
        <end position="561"/>
    </location>
</feature>
<feature type="strand" evidence="5">
    <location>
        <begin position="578"/>
        <end position="580"/>
    </location>
</feature>
<feature type="strand" evidence="5">
    <location>
        <begin position="591"/>
        <end position="596"/>
    </location>
</feature>
<feature type="helix" evidence="5">
    <location>
        <begin position="598"/>
        <end position="622"/>
    </location>
</feature>
<feature type="turn" evidence="5">
    <location>
        <begin position="628"/>
        <end position="630"/>
    </location>
</feature>
<feature type="strand" evidence="5">
    <location>
        <begin position="641"/>
        <end position="648"/>
    </location>
</feature>
<feature type="helix" evidence="5">
    <location>
        <begin position="649"/>
        <end position="658"/>
    </location>
</feature>
<feature type="strand" evidence="5">
    <location>
        <begin position="664"/>
        <end position="666"/>
    </location>
</feature>
<feature type="strand" evidence="5">
    <location>
        <begin position="670"/>
        <end position="672"/>
    </location>
</feature>
<feature type="strand" evidence="5">
    <location>
        <begin position="675"/>
        <end position="679"/>
    </location>
</feature>
<feature type="helix" evidence="5">
    <location>
        <begin position="681"/>
        <end position="690"/>
    </location>
</feature>
<feature type="strand" evidence="5">
    <location>
        <begin position="693"/>
        <end position="699"/>
    </location>
</feature>
<feature type="helix" evidence="5">
    <location>
        <begin position="703"/>
        <end position="712"/>
    </location>
</feature>
<feature type="strand" evidence="5">
    <location>
        <begin position="716"/>
        <end position="721"/>
    </location>
</feature>
<feature type="helix" evidence="5">
    <location>
        <begin position="722"/>
        <end position="734"/>
    </location>
</feature>
<feature type="strand" evidence="5">
    <location>
        <begin position="742"/>
        <end position="754"/>
    </location>
</feature>
<feature type="turn" evidence="5">
    <location>
        <begin position="758"/>
        <end position="760"/>
    </location>
</feature>
<feature type="strand" evidence="5">
    <location>
        <begin position="764"/>
        <end position="771"/>
    </location>
</feature>
<feature type="strand" evidence="5">
    <location>
        <begin position="773"/>
        <end position="777"/>
    </location>
</feature>
<feature type="strand" evidence="5">
    <location>
        <begin position="779"/>
        <end position="783"/>
    </location>
</feature>
<feature type="strand" evidence="5">
    <location>
        <begin position="786"/>
        <end position="791"/>
    </location>
</feature>
<feature type="strand" evidence="5">
    <location>
        <begin position="793"/>
        <end position="795"/>
    </location>
</feature>
<feature type="strand" evidence="5">
    <location>
        <begin position="798"/>
        <end position="801"/>
    </location>
</feature>
<feature type="strand" evidence="5">
    <location>
        <begin position="804"/>
        <end position="806"/>
    </location>
</feature>
<feature type="strand" evidence="5">
    <location>
        <begin position="811"/>
        <end position="816"/>
    </location>
</feature>
<feature type="strand" evidence="5">
    <location>
        <begin position="827"/>
        <end position="833"/>
    </location>
</feature>
<protein>
    <recommendedName>
        <fullName evidence="2">Translation initiation factor IF-2</fullName>
    </recommendedName>
</protein>
<organism>
    <name type="scientific">Pseudomonas aeruginosa (strain ATCC 15692 / DSM 22644 / CIP 104116 / JCM 14847 / LMG 12228 / 1C / PRS 101 / PAO1)</name>
    <dbReference type="NCBI Taxonomy" id="208964"/>
    <lineage>
        <taxon>Bacteria</taxon>
        <taxon>Pseudomonadati</taxon>
        <taxon>Pseudomonadota</taxon>
        <taxon>Gammaproteobacteria</taxon>
        <taxon>Pseudomonadales</taxon>
        <taxon>Pseudomonadaceae</taxon>
        <taxon>Pseudomonas</taxon>
    </lineage>
</organism>
<sequence length="840" mass="90912">MTQVTVKELAQVVDTPVERLLLQMRDAGLPHTSAEQVVTDSEKQALLTHLKGSHGDRASEPRKITLQRKTTTTLKVGGSKTVSVEVRKKKTYVKRSPDEIEAERQRELEEQRAAEEAERLKAEEAAARQRAEEEARKAEEAARAKAAQEAAATAGAEPAVVADVAVAEPVAKPAAVEERKKEEPRRVPKRDEDDDRRDRKHTQHRPSVKEKEKVPAPRVAPRSTDEESDGYRRGGRGGKSKLKKRNQHGFQNPTGPIVREVNIGETITVAELAAQMSVKGAEVVKFMFKMGSPVTINQVLDQETAQLVAEELGHKVKLVSENALEEQLAESLKFEGEAVTRAPVVTVMGHVDHGKTSLLDYIRRAKVAAGEAGGITQHIGAYHVETERGMVTFLDTPGHAAFTAMRARGAQATDIVILVVAADDGVMPQTQEAVQHAKAAGVPIVVAVNKIDKPEANPDNIKNGLAALDVIPEEWGGDAPFVPVSAKLGTGVDELLEAVLLQAEVLELKATPSAPGRGVVVESRLDKGRGPVATVLVQDGTLRQGDMVLVGINYGRVRAMLDENGKPIKEAGPSIPVEILGLDGTPDAGDEMTVVADEKKAREVALFRQGKFREVKLARAHAGKLENIFENMGQEEKKTLNIVLKADVRGSLEALQGSLSGLGNDEVQVRVVGGGVGGITESDANLALASNAVLFGFNVRADAGARKIVEAEGLDMRYYNVIYDIIEDVKKALTGMLGSDLRENILGIAEVRDVFRSPKFGAIAGCMVTEGMVHRNRPIRVLRDDVVIFEGELESLRRFKDDVAEVRAGMECGIGVKSYNDVKVGDKIEVFEKVEVARSL</sequence>